<gene>
    <name type="primary">PRKA</name>
</gene>
<organism>
    <name type="scientific">Chlamydomonas reinhardtii</name>
    <name type="common">Chlamydomonas smithii</name>
    <dbReference type="NCBI Taxonomy" id="3055"/>
    <lineage>
        <taxon>Eukaryota</taxon>
        <taxon>Viridiplantae</taxon>
        <taxon>Chlorophyta</taxon>
        <taxon>core chlorophytes</taxon>
        <taxon>Chlorophyceae</taxon>
        <taxon>CS clade</taxon>
        <taxon>Chlamydomonadales</taxon>
        <taxon>Chlamydomonadaceae</taxon>
        <taxon>Chlamydomonas</taxon>
    </lineage>
</organism>
<reference key="1">
    <citation type="journal article" date="1990" name="Plant Physiol.">
        <title>Chlamydomonas reinhardtii phosphoribulokinase: sequence, purification and kinetics.</title>
        <authorList>
            <person name="Roesler K.R."/>
            <person name="Ogren W.L."/>
        </authorList>
    </citation>
    <scope>NUCLEOTIDE SEQUENCE [MRNA]</scope>
    <scope>PARTIAL PROTEIN SEQUENCE</scope>
</reference>
<reference key="2">
    <citation type="submission" date="2000-01" db="EMBL/GenBank/DDBJ databases">
        <authorList>
            <person name="Smith B.D."/>
            <person name="Spreitzer R.J."/>
        </authorList>
    </citation>
    <scope>NUCLEOTIDE SEQUENCE [GENOMIC DNA]</scope>
    <source>
        <strain>2137</strain>
    </source>
</reference>
<reference key="3">
    <citation type="journal article" date="1992" name="Plant Physiol.">
        <title>Functional importance of arginine 64 in Chlamydomonas reinhardtii phosphoribulokinase.</title>
        <authorList>
            <person name="Roesler K.R."/>
            <person name="Marcotte B.L."/>
            <person name="Ogren W.L."/>
        </authorList>
    </citation>
    <scope>MUTANT 12-2B</scope>
</reference>
<reference key="4">
    <citation type="journal article" date="2003" name="Biochemistry">
        <title>The small protein CP12: a protein linker for supramolecular complex assembly.</title>
        <authorList>
            <person name="Graciet E."/>
            <person name="Gans P."/>
            <person name="Wedel N."/>
            <person name="Lebreton S."/>
            <person name="Camadro J.-M."/>
            <person name="Gontero B."/>
        </authorList>
    </citation>
    <scope>SUBUNIT</scope>
</reference>
<accession>P19824</accession>
<dbReference type="EC" id="2.7.1.19"/>
<dbReference type="EMBL" id="M36123">
    <property type="protein sequence ID" value="AAA33090.1"/>
    <property type="molecule type" value="mRNA"/>
</dbReference>
<dbReference type="EMBL" id="AF228914">
    <property type="protein sequence ID" value="AAF36402.1"/>
    <property type="molecule type" value="Genomic_DNA"/>
</dbReference>
<dbReference type="PIR" id="T08167">
    <property type="entry name" value="T08167"/>
</dbReference>
<dbReference type="RefSeq" id="XP_001694038.1">
    <property type="nucleotide sequence ID" value="XM_001693986.1"/>
</dbReference>
<dbReference type="PDB" id="6H7G">
    <property type="method" value="X-ray"/>
    <property type="resolution" value="2.60 A"/>
    <property type="chains" value="A/B=32-375"/>
</dbReference>
<dbReference type="PDBsum" id="6H7G"/>
<dbReference type="SASBDB" id="P19824"/>
<dbReference type="SMR" id="P19824"/>
<dbReference type="IntAct" id="P19824">
    <property type="interactions" value="1"/>
</dbReference>
<dbReference type="MINT" id="P19824"/>
<dbReference type="PaxDb" id="3055-EDP02974"/>
<dbReference type="ProMEX" id="P19824"/>
<dbReference type="EnsemblPlants" id="PNW75922">
    <property type="protein sequence ID" value="PNW75922"/>
    <property type="gene ID" value="CHLRE_12g554800v5"/>
</dbReference>
<dbReference type="Gramene" id="PNW75922">
    <property type="protein sequence ID" value="PNW75922"/>
    <property type="gene ID" value="CHLRE_12g554800v5"/>
</dbReference>
<dbReference type="KEGG" id="cre:CHLRE_12g554800v5"/>
<dbReference type="eggNOG" id="KOG4203">
    <property type="taxonomic scope" value="Eukaryota"/>
</dbReference>
<dbReference type="HOGENOM" id="CLU_033590_1_0_1"/>
<dbReference type="OMA" id="GLKMRAT"/>
<dbReference type="OrthoDB" id="738517at2759"/>
<dbReference type="BRENDA" id="2.7.1.19">
    <property type="organism ID" value="1318"/>
</dbReference>
<dbReference type="UniPathway" id="UPA00116"/>
<dbReference type="GO" id="GO:0009507">
    <property type="term" value="C:chloroplast"/>
    <property type="evidence" value="ECO:0000314"/>
    <property type="project" value="CAFA"/>
</dbReference>
<dbReference type="GO" id="GO:0099080">
    <property type="term" value="C:supramolecular complex"/>
    <property type="evidence" value="ECO:0000314"/>
    <property type="project" value="CAFA"/>
</dbReference>
<dbReference type="GO" id="GO:0005524">
    <property type="term" value="F:ATP binding"/>
    <property type="evidence" value="ECO:0007669"/>
    <property type="project" value="UniProtKB-KW"/>
</dbReference>
<dbReference type="GO" id="GO:0019899">
    <property type="term" value="F:enzyme binding"/>
    <property type="evidence" value="ECO:0000353"/>
    <property type="project" value="CAFA"/>
</dbReference>
<dbReference type="GO" id="GO:0008974">
    <property type="term" value="F:phosphoribulokinase activity"/>
    <property type="evidence" value="ECO:0007669"/>
    <property type="project" value="UniProtKB-EC"/>
</dbReference>
<dbReference type="GO" id="GO:0042803">
    <property type="term" value="F:protein homodimerization activity"/>
    <property type="evidence" value="ECO:0000314"/>
    <property type="project" value="CAFA"/>
</dbReference>
<dbReference type="GO" id="GO:0019253">
    <property type="term" value="P:reductive pentose-phosphate cycle"/>
    <property type="evidence" value="ECO:0007669"/>
    <property type="project" value="UniProtKB-UniPathway"/>
</dbReference>
<dbReference type="CDD" id="cd02026">
    <property type="entry name" value="PRK"/>
    <property type="match status" value="1"/>
</dbReference>
<dbReference type="FunFam" id="3.40.50.300:FF:000619">
    <property type="entry name" value="Phosphoribulokinase"/>
    <property type="match status" value="1"/>
</dbReference>
<dbReference type="Gene3D" id="3.40.50.300">
    <property type="entry name" value="P-loop containing nucleotide triphosphate hydrolases"/>
    <property type="match status" value="1"/>
</dbReference>
<dbReference type="InterPro" id="IPR027417">
    <property type="entry name" value="P-loop_NTPase"/>
</dbReference>
<dbReference type="InterPro" id="IPR006082">
    <property type="entry name" value="PRK"/>
</dbReference>
<dbReference type="InterPro" id="IPR006083">
    <property type="entry name" value="PRK/URK"/>
</dbReference>
<dbReference type="NCBIfam" id="NF005655">
    <property type="entry name" value="PRK07429.1"/>
    <property type="match status" value="1"/>
</dbReference>
<dbReference type="PANTHER" id="PTHR10285">
    <property type="entry name" value="URIDINE KINASE"/>
    <property type="match status" value="1"/>
</dbReference>
<dbReference type="Pfam" id="PF00485">
    <property type="entry name" value="PRK"/>
    <property type="match status" value="1"/>
</dbReference>
<dbReference type="PRINTS" id="PR00478">
    <property type="entry name" value="PHRIBLKINASE"/>
</dbReference>
<dbReference type="SUPFAM" id="SSF52540">
    <property type="entry name" value="P-loop containing nucleoside triphosphate hydrolases"/>
    <property type="match status" value="1"/>
</dbReference>
<dbReference type="PROSITE" id="PS00567">
    <property type="entry name" value="PHOSPHORIBULOKINASE"/>
    <property type="match status" value="1"/>
</dbReference>
<keyword id="KW-0002">3D-structure</keyword>
<keyword id="KW-0067">ATP-binding</keyword>
<keyword id="KW-0113">Calvin cycle</keyword>
<keyword id="KW-0150">Chloroplast</keyword>
<keyword id="KW-0903">Direct protein sequencing</keyword>
<keyword id="KW-1015">Disulfide bond</keyword>
<keyword id="KW-0418">Kinase</keyword>
<keyword id="KW-0547">Nucleotide-binding</keyword>
<keyword id="KW-0602">Photosynthesis</keyword>
<keyword id="KW-0934">Plastid</keyword>
<keyword id="KW-0808">Transferase</keyword>
<keyword id="KW-0809">Transit peptide</keyword>
<sequence length="375" mass="41892">MAFTMRAPAPRATAQSRVTANRARRSLVVRADKDKTVVIGLAADSGCGKSTFMRRMTSIFGGVPKPPAGGNPDSNTLISDMTTVICLDDYHCLDRNGRKVKGVTALAPEAQNFDLMYNQVKALKEGKSVDKPIYNHVSGLIDAPEKIESPPILVIEGLHPFYDKRVAELLDFKIYLDISDDIKFAWKIQRDMAERGHSLESIKSSIAARKPDFDAYIDPQKKDADMIIQVLPTQLVPDDKGQYLRVRLIMKEGSKMFDPVYLFDEGSTISWIPCGRKLTCSFPGIKMFYGPDTWYGQEVSVLEMDGQFDKLEELIYVESHLSNTSAKFYGEITQQMLKNSGFPGSNNGTGLFQTIVGLKVREVYERIVKKDVVPV</sequence>
<proteinExistence type="evidence at protein level"/>
<evidence type="ECO:0000250" key="1"/>
<evidence type="ECO:0000269" key="2">
    <source>
    </source>
</evidence>
<evidence type="ECO:0000305" key="3"/>
<evidence type="ECO:0007829" key="4">
    <source>
        <dbReference type="PDB" id="6H7G"/>
    </source>
</evidence>
<name>KPPR_CHLRE</name>
<comment type="catalytic activity">
    <reaction>
        <text>D-ribulose 5-phosphate + ATP = D-ribulose 1,5-bisphosphate + ADP + H(+)</text>
        <dbReference type="Rhea" id="RHEA:19365"/>
        <dbReference type="ChEBI" id="CHEBI:15378"/>
        <dbReference type="ChEBI" id="CHEBI:30616"/>
        <dbReference type="ChEBI" id="CHEBI:57870"/>
        <dbReference type="ChEBI" id="CHEBI:58121"/>
        <dbReference type="ChEBI" id="CHEBI:456216"/>
        <dbReference type="EC" id="2.7.1.19"/>
    </reaction>
</comment>
<comment type="activity regulation">
    <text>Light regulated via thioredoxin by reversible oxidation/reduction of sulfhydryl/disulfide groups.</text>
</comment>
<comment type="pathway">
    <text>Carbohydrate biosynthesis; Calvin cycle.</text>
</comment>
<comment type="subunit">
    <text evidence="2">Component of a complex that contains two dimers of PRK, two tetramers of GAPDH and CP12.</text>
</comment>
<comment type="interaction">
    <interactant intactId="EBI-9538490">
        <id>P19824</id>
    </interactant>
    <interactant intactId="EBI-9538486">
        <id>A6Q0K5</id>
        <label>CP12</label>
    </interactant>
    <organismsDiffer>false</organismsDiffer>
    <experiments>2</experiments>
</comment>
<comment type="subcellular location">
    <subcellularLocation>
        <location>Plastid</location>
        <location>Chloroplast</location>
    </subcellularLocation>
</comment>
<comment type="similarity">
    <text evidence="3">Belongs to the phosphoribulokinase family.</text>
</comment>
<feature type="transit peptide" description="Chloroplast">
    <location>
        <begin position="1"/>
        <end position="31"/>
    </location>
</feature>
<feature type="chain" id="PRO_0000025752" description="Phosphoribulokinase, chloroplastic">
    <location>
        <begin position="32"/>
        <end position="375"/>
    </location>
</feature>
<feature type="disulfide bond" evidence="1">
    <location>
        <begin position="47"/>
        <end position="86"/>
    </location>
</feature>
<feature type="sequence variant" description="In mutant 12-2B; increase in substrate affinity.">
    <original>R</original>
    <variation>C</variation>
    <location>
        <position position="95"/>
    </location>
</feature>
<feature type="strand" evidence="4">
    <location>
        <begin position="37"/>
        <end position="42"/>
    </location>
</feature>
<feature type="helix" evidence="4">
    <location>
        <begin position="49"/>
        <end position="60"/>
    </location>
</feature>
<feature type="strand" evidence="4">
    <location>
        <begin position="80"/>
        <end position="86"/>
    </location>
</feature>
<feature type="helix" evidence="4">
    <location>
        <begin position="87"/>
        <end position="90"/>
    </location>
</feature>
<feature type="strand" evidence="4">
    <location>
        <begin position="91"/>
        <end position="93"/>
    </location>
</feature>
<feature type="helix" evidence="4">
    <location>
        <begin position="96"/>
        <end position="99"/>
    </location>
</feature>
<feature type="turn" evidence="4">
    <location>
        <begin position="100"/>
        <end position="102"/>
    </location>
</feature>
<feature type="helix" evidence="4">
    <location>
        <begin position="108"/>
        <end position="110"/>
    </location>
</feature>
<feature type="helix" evidence="4">
    <location>
        <begin position="113"/>
        <end position="124"/>
    </location>
</feature>
<feature type="strand" evidence="4">
    <location>
        <begin position="129"/>
        <end position="134"/>
    </location>
</feature>
<feature type="turn" evidence="4">
    <location>
        <begin position="136"/>
        <end position="138"/>
    </location>
</feature>
<feature type="strand" evidence="4">
    <location>
        <begin position="140"/>
        <end position="147"/>
    </location>
</feature>
<feature type="strand" evidence="4">
    <location>
        <begin position="151"/>
        <end position="158"/>
    </location>
</feature>
<feature type="strand" evidence="4">
    <location>
        <begin position="160"/>
        <end position="163"/>
    </location>
</feature>
<feature type="helix" evidence="4">
    <location>
        <begin position="164"/>
        <end position="169"/>
    </location>
</feature>
<feature type="strand" evidence="4">
    <location>
        <begin position="171"/>
        <end position="178"/>
    </location>
</feature>
<feature type="helix" evidence="4">
    <location>
        <begin position="180"/>
        <end position="190"/>
    </location>
</feature>
<feature type="strand" evidence="4">
    <location>
        <begin position="191"/>
        <end position="198"/>
    </location>
</feature>
<feature type="turn" evidence="4">
    <location>
        <begin position="200"/>
        <end position="209"/>
    </location>
</feature>
<feature type="helix" evidence="4">
    <location>
        <begin position="210"/>
        <end position="216"/>
    </location>
</feature>
<feature type="helix" evidence="4">
    <location>
        <begin position="218"/>
        <end position="223"/>
    </location>
</feature>
<feature type="strand" evidence="4">
    <location>
        <begin position="225"/>
        <end position="232"/>
    </location>
</feature>
<feature type="strand" evidence="4">
    <location>
        <begin position="234"/>
        <end position="236"/>
    </location>
</feature>
<feature type="strand" evidence="4">
    <location>
        <begin position="239"/>
        <end position="241"/>
    </location>
</feature>
<feature type="strand" evidence="4">
    <location>
        <begin position="243"/>
        <end position="252"/>
    </location>
</feature>
<feature type="strand" evidence="4">
    <location>
        <begin position="261"/>
        <end position="264"/>
    </location>
</feature>
<feature type="strand" evidence="4">
    <location>
        <begin position="268"/>
        <end position="272"/>
    </location>
</feature>
<feature type="strand" evidence="4">
    <location>
        <begin position="275"/>
        <end position="278"/>
    </location>
</feature>
<feature type="strand" evidence="4">
    <location>
        <begin position="285"/>
        <end position="294"/>
    </location>
</feature>
<feature type="strand" evidence="4">
    <location>
        <begin position="297"/>
        <end position="306"/>
    </location>
</feature>
<feature type="helix" evidence="4">
    <location>
        <begin position="311"/>
        <end position="313"/>
    </location>
</feature>
<feature type="helix" evidence="4">
    <location>
        <begin position="314"/>
        <end position="318"/>
    </location>
</feature>
<feature type="strand" evidence="4">
    <location>
        <begin position="327"/>
        <end position="330"/>
    </location>
</feature>
<feature type="helix" evidence="4">
    <location>
        <begin position="331"/>
        <end position="338"/>
    </location>
</feature>
<feature type="turn" evidence="4">
    <location>
        <begin position="339"/>
        <end position="341"/>
    </location>
</feature>
<feature type="turn" evidence="4">
    <location>
        <begin position="343"/>
        <end position="346"/>
    </location>
</feature>
<feature type="helix" evidence="4">
    <location>
        <begin position="348"/>
        <end position="368"/>
    </location>
</feature>
<protein>
    <recommendedName>
        <fullName>Phosphoribulokinase, chloroplastic</fullName>
        <shortName>PRK</shortName>
        <shortName>PRKase</shortName>
        <ecNumber>2.7.1.19</ecNumber>
    </recommendedName>
    <alternativeName>
        <fullName>Phosphopentokinase</fullName>
    </alternativeName>
</protein>